<feature type="chain" id="PRO_0000111567" description="Ribonuclease HII">
    <location>
        <begin position="1"/>
        <end position="229"/>
    </location>
</feature>
<feature type="domain" description="RNase H type-2" evidence="2">
    <location>
        <begin position="34"/>
        <end position="225"/>
    </location>
</feature>
<feature type="binding site" evidence="1">
    <location>
        <position position="40"/>
    </location>
    <ligand>
        <name>a divalent metal cation</name>
        <dbReference type="ChEBI" id="CHEBI:60240"/>
    </ligand>
</feature>
<feature type="binding site" evidence="1">
    <location>
        <position position="41"/>
    </location>
    <ligand>
        <name>a divalent metal cation</name>
        <dbReference type="ChEBI" id="CHEBI:60240"/>
    </ligand>
</feature>
<feature type="binding site" evidence="1">
    <location>
        <position position="134"/>
    </location>
    <ligand>
        <name>a divalent metal cation</name>
        <dbReference type="ChEBI" id="CHEBI:60240"/>
    </ligand>
</feature>
<sequence>MITQEHYCALPAPKIRTLKHLRTFEVTLDKHGLGPVAGVDEAGRGSCCGPITIAACIMPQRPIAQLQALTDSKKLSAAKRAELYPLIKKYALAWSIIHISAAEIDREGIQHANIFGMRRAIEKLDVAPGYVLTDAMKVPGLRCPSLPIIGGDAAVRCIAAASVLAKHSRDLIMDDLGGKYPEYGLEDHKGYGTKSHMDAVRHHGATPEHRYSYSNVKAAHDQWLQEKTQ</sequence>
<name>RNH2_CORDI</name>
<dbReference type="EC" id="3.1.26.4" evidence="1"/>
<dbReference type="EMBL" id="BX248358">
    <property type="protein sequence ID" value="CAE50042.1"/>
    <property type="molecule type" value="Genomic_DNA"/>
</dbReference>
<dbReference type="RefSeq" id="WP_010935119.1">
    <property type="nucleotide sequence ID" value="NC_002935.2"/>
</dbReference>
<dbReference type="SMR" id="Q6NGJ8"/>
<dbReference type="STRING" id="257309.DIP1515"/>
<dbReference type="KEGG" id="cdi:DIP1515"/>
<dbReference type="HOGENOM" id="CLU_036532_1_0_11"/>
<dbReference type="Proteomes" id="UP000002198">
    <property type="component" value="Chromosome"/>
</dbReference>
<dbReference type="GO" id="GO:0005737">
    <property type="term" value="C:cytoplasm"/>
    <property type="evidence" value="ECO:0007669"/>
    <property type="project" value="UniProtKB-SubCell"/>
</dbReference>
<dbReference type="GO" id="GO:0032299">
    <property type="term" value="C:ribonuclease H2 complex"/>
    <property type="evidence" value="ECO:0007669"/>
    <property type="project" value="TreeGrafter"/>
</dbReference>
<dbReference type="GO" id="GO:0030145">
    <property type="term" value="F:manganese ion binding"/>
    <property type="evidence" value="ECO:0007669"/>
    <property type="project" value="UniProtKB-UniRule"/>
</dbReference>
<dbReference type="GO" id="GO:0003723">
    <property type="term" value="F:RNA binding"/>
    <property type="evidence" value="ECO:0007669"/>
    <property type="project" value="InterPro"/>
</dbReference>
<dbReference type="GO" id="GO:0004523">
    <property type="term" value="F:RNA-DNA hybrid ribonuclease activity"/>
    <property type="evidence" value="ECO:0007669"/>
    <property type="project" value="UniProtKB-UniRule"/>
</dbReference>
<dbReference type="GO" id="GO:0043137">
    <property type="term" value="P:DNA replication, removal of RNA primer"/>
    <property type="evidence" value="ECO:0007669"/>
    <property type="project" value="TreeGrafter"/>
</dbReference>
<dbReference type="GO" id="GO:0006298">
    <property type="term" value="P:mismatch repair"/>
    <property type="evidence" value="ECO:0007669"/>
    <property type="project" value="TreeGrafter"/>
</dbReference>
<dbReference type="CDD" id="cd07182">
    <property type="entry name" value="RNase_HII_bacteria_HII_like"/>
    <property type="match status" value="1"/>
</dbReference>
<dbReference type="Gene3D" id="3.30.420.10">
    <property type="entry name" value="Ribonuclease H-like superfamily/Ribonuclease H"/>
    <property type="match status" value="1"/>
</dbReference>
<dbReference type="HAMAP" id="MF_00052_B">
    <property type="entry name" value="RNase_HII_B"/>
    <property type="match status" value="1"/>
</dbReference>
<dbReference type="InterPro" id="IPR022898">
    <property type="entry name" value="RNase_HII"/>
</dbReference>
<dbReference type="InterPro" id="IPR001352">
    <property type="entry name" value="RNase_HII/HIII"/>
</dbReference>
<dbReference type="InterPro" id="IPR024567">
    <property type="entry name" value="RNase_HII/HIII_dom"/>
</dbReference>
<dbReference type="InterPro" id="IPR012337">
    <property type="entry name" value="RNaseH-like_sf"/>
</dbReference>
<dbReference type="InterPro" id="IPR036397">
    <property type="entry name" value="RNaseH_sf"/>
</dbReference>
<dbReference type="NCBIfam" id="NF000595">
    <property type="entry name" value="PRK00015.1-3"/>
    <property type="match status" value="1"/>
</dbReference>
<dbReference type="NCBIfam" id="NF000598">
    <property type="entry name" value="PRK00015.2-2"/>
    <property type="match status" value="1"/>
</dbReference>
<dbReference type="PANTHER" id="PTHR10954">
    <property type="entry name" value="RIBONUCLEASE H2 SUBUNIT A"/>
    <property type="match status" value="1"/>
</dbReference>
<dbReference type="PANTHER" id="PTHR10954:SF18">
    <property type="entry name" value="RIBONUCLEASE HII"/>
    <property type="match status" value="1"/>
</dbReference>
<dbReference type="Pfam" id="PF01351">
    <property type="entry name" value="RNase_HII"/>
    <property type="match status" value="1"/>
</dbReference>
<dbReference type="SUPFAM" id="SSF53098">
    <property type="entry name" value="Ribonuclease H-like"/>
    <property type="match status" value="1"/>
</dbReference>
<dbReference type="PROSITE" id="PS51975">
    <property type="entry name" value="RNASE_H_2"/>
    <property type="match status" value="1"/>
</dbReference>
<keyword id="KW-0963">Cytoplasm</keyword>
<keyword id="KW-0255">Endonuclease</keyword>
<keyword id="KW-0378">Hydrolase</keyword>
<keyword id="KW-0464">Manganese</keyword>
<keyword id="KW-0479">Metal-binding</keyword>
<keyword id="KW-0540">Nuclease</keyword>
<keyword id="KW-1185">Reference proteome</keyword>
<comment type="function">
    <text evidence="1">Endonuclease that specifically degrades the RNA of RNA-DNA hybrids.</text>
</comment>
<comment type="catalytic activity">
    <reaction evidence="1">
        <text>Endonucleolytic cleavage to 5'-phosphomonoester.</text>
        <dbReference type="EC" id="3.1.26.4"/>
    </reaction>
</comment>
<comment type="cofactor">
    <cofactor evidence="1">
        <name>Mn(2+)</name>
        <dbReference type="ChEBI" id="CHEBI:29035"/>
    </cofactor>
    <cofactor evidence="1">
        <name>Mg(2+)</name>
        <dbReference type="ChEBI" id="CHEBI:18420"/>
    </cofactor>
    <text evidence="1">Manganese or magnesium. Binds 1 divalent metal ion per monomer in the absence of substrate. May bind a second metal ion after substrate binding.</text>
</comment>
<comment type="subcellular location">
    <subcellularLocation>
        <location evidence="1">Cytoplasm</location>
    </subcellularLocation>
</comment>
<comment type="similarity">
    <text evidence="1">Belongs to the RNase HII family.</text>
</comment>
<organism>
    <name type="scientific">Corynebacterium diphtheriae (strain ATCC 700971 / NCTC 13129 / Biotype gravis)</name>
    <dbReference type="NCBI Taxonomy" id="257309"/>
    <lineage>
        <taxon>Bacteria</taxon>
        <taxon>Bacillati</taxon>
        <taxon>Actinomycetota</taxon>
        <taxon>Actinomycetes</taxon>
        <taxon>Mycobacteriales</taxon>
        <taxon>Corynebacteriaceae</taxon>
        <taxon>Corynebacterium</taxon>
    </lineage>
</organism>
<accession>Q6NGJ8</accession>
<evidence type="ECO:0000255" key="1">
    <source>
        <dbReference type="HAMAP-Rule" id="MF_00052"/>
    </source>
</evidence>
<evidence type="ECO:0000255" key="2">
    <source>
        <dbReference type="PROSITE-ProRule" id="PRU01319"/>
    </source>
</evidence>
<protein>
    <recommendedName>
        <fullName evidence="1">Ribonuclease HII</fullName>
        <shortName evidence="1">RNase HII</shortName>
        <ecNumber evidence="1">3.1.26.4</ecNumber>
    </recommendedName>
</protein>
<proteinExistence type="inferred from homology"/>
<reference key="1">
    <citation type="journal article" date="2003" name="Nucleic Acids Res.">
        <title>The complete genome sequence and analysis of Corynebacterium diphtheriae NCTC13129.</title>
        <authorList>
            <person name="Cerdeno-Tarraga A.-M."/>
            <person name="Efstratiou A."/>
            <person name="Dover L.G."/>
            <person name="Holden M.T.G."/>
            <person name="Pallen M.J."/>
            <person name="Bentley S.D."/>
            <person name="Besra G.S."/>
            <person name="Churcher C.M."/>
            <person name="James K.D."/>
            <person name="De Zoysa A."/>
            <person name="Chillingworth T."/>
            <person name="Cronin A."/>
            <person name="Dowd L."/>
            <person name="Feltwell T."/>
            <person name="Hamlin N."/>
            <person name="Holroyd S."/>
            <person name="Jagels K."/>
            <person name="Moule S."/>
            <person name="Quail M.A."/>
            <person name="Rabbinowitsch E."/>
            <person name="Rutherford K.M."/>
            <person name="Thomson N.R."/>
            <person name="Unwin L."/>
            <person name="Whitehead S."/>
            <person name="Barrell B.G."/>
            <person name="Parkhill J."/>
        </authorList>
    </citation>
    <scope>NUCLEOTIDE SEQUENCE [LARGE SCALE GENOMIC DNA]</scope>
    <source>
        <strain>ATCC 700971 / NCTC 13129 / Biotype gravis</strain>
    </source>
</reference>
<gene>
    <name evidence="1" type="primary">rnhB</name>
    <name type="ordered locus">DIP1515</name>
</gene>